<accession>A0K4B3</accession>
<proteinExistence type="inferred from homology"/>
<feature type="chain" id="PRO_1000021932" description="RNA pyrophosphohydrolase">
    <location>
        <begin position="1"/>
        <end position="214"/>
    </location>
</feature>
<feature type="domain" description="Nudix hydrolase" evidence="1">
    <location>
        <begin position="6"/>
        <end position="149"/>
    </location>
</feature>
<feature type="short sequence motif" description="Nudix box">
    <location>
        <begin position="38"/>
        <end position="59"/>
    </location>
</feature>
<gene>
    <name evidence="1" type="primary">rppH</name>
    <name evidence="1" type="synonym">nudH</name>
    <name type="ordered locus">Bcen2424_0586</name>
</gene>
<comment type="function">
    <text evidence="1">Accelerates the degradation of transcripts by removing pyrophosphate from the 5'-end of triphosphorylated RNA, leading to a more labile monophosphorylated state that can stimulate subsequent ribonuclease cleavage.</text>
</comment>
<comment type="cofactor">
    <cofactor evidence="1">
        <name>a divalent metal cation</name>
        <dbReference type="ChEBI" id="CHEBI:60240"/>
    </cofactor>
</comment>
<comment type="similarity">
    <text evidence="1">Belongs to the Nudix hydrolase family. RppH subfamily.</text>
</comment>
<organism>
    <name type="scientific">Burkholderia cenocepacia (strain HI2424)</name>
    <dbReference type="NCBI Taxonomy" id="331272"/>
    <lineage>
        <taxon>Bacteria</taxon>
        <taxon>Pseudomonadati</taxon>
        <taxon>Pseudomonadota</taxon>
        <taxon>Betaproteobacteria</taxon>
        <taxon>Burkholderiales</taxon>
        <taxon>Burkholderiaceae</taxon>
        <taxon>Burkholderia</taxon>
        <taxon>Burkholderia cepacia complex</taxon>
    </lineage>
</organism>
<dbReference type="EC" id="3.6.1.-" evidence="1"/>
<dbReference type="EMBL" id="CP000458">
    <property type="protein sequence ID" value="ABK07340.1"/>
    <property type="molecule type" value="Genomic_DNA"/>
</dbReference>
<dbReference type="RefSeq" id="WP_006476994.1">
    <property type="nucleotide sequence ID" value="NC_008542.1"/>
</dbReference>
<dbReference type="SMR" id="A0K4B3"/>
<dbReference type="KEGG" id="bch:Bcen2424_0586"/>
<dbReference type="HOGENOM" id="CLU_087195_0_1_4"/>
<dbReference type="GO" id="GO:0016462">
    <property type="term" value="F:pyrophosphatase activity"/>
    <property type="evidence" value="ECO:0007669"/>
    <property type="project" value="UniProtKB-ARBA"/>
</dbReference>
<dbReference type="CDD" id="cd03671">
    <property type="entry name" value="NUDIX_Ap4A_hydrolase_plant_like"/>
    <property type="match status" value="1"/>
</dbReference>
<dbReference type="Gene3D" id="3.90.79.10">
    <property type="entry name" value="Nucleoside Triphosphate Pyrophosphohydrolase"/>
    <property type="match status" value="1"/>
</dbReference>
<dbReference type="HAMAP" id="MF_00298">
    <property type="entry name" value="Nudix_RppH"/>
    <property type="match status" value="1"/>
</dbReference>
<dbReference type="InterPro" id="IPR020476">
    <property type="entry name" value="Nudix_hydrolase"/>
</dbReference>
<dbReference type="InterPro" id="IPR015797">
    <property type="entry name" value="NUDIX_hydrolase-like_dom_sf"/>
</dbReference>
<dbReference type="InterPro" id="IPR020084">
    <property type="entry name" value="NUDIX_hydrolase_CS"/>
</dbReference>
<dbReference type="InterPro" id="IPR000086">
    <property type="entry name" value="NUDIX_hydrolase_dom"/>
</dbReference>
<dbReference type="InterPro" id="IPR022927">
    <property type="entry name" value="RppH"/>
</dbReference>
<dbReference type="NCBIfam" id="NF001935">
    <property type="entry name" value="PRK00714.1-2"/>
    <property type="match status" value="1"/>
</dbReference>
<dbReference type="NCBIfam" id="NF001937">
    <property type="entry name" value="PRK00714.1-4"/>
    <property type="match status" value="1"/>
</dbReference>
<dbReference type="NCBIfam" id="NF001938">
    <property type="entry name" value="PRK00714.1-5"/>
    <property type="match status" value="1"/>
</dbReference>
<dbReference type="PANTHER" id="PTHR43736">
    <property type="entry name" value="ADP-RIBOSE PYROPHOSPHATASE"/>
    <property type="match status" value="1"/>
</dbReference>
<dbReference type="PANTHER" id="PTHR43736:SF1">
    <property type="entry name" value="DIHYDRONEOPTERIN TRIPHOSPHATE DIPHOSPHATASE"/>
    <property type="match status" value="1"/>
</dbReference>
<dbReference type="Pfam" id="PF00293">
    <property type="entry name" value="NUDIX"/>
    <property type="match status" value="1"/>
</dbReference>
<dbReference type="PRINTS" id="PR00502">
    <property type="entry name" value="NUDIXFAMILY"/>
</dbReference>
<dbReference type="SUPFAM" id="SSF55811">
    <property type="entry name" value="Nudix"/>
    <property type="match status" value="1"/>
</dbReference>
<dbReference type="PROSITE" id="PS51462">
    <property type="entry name" value="NUDIX"/>
    <property type="match status" value="1"/>
</dbReference>
<dbReference type="PROSITE" id="PS00893">
    <property type="entry name" value="NUDIX_BOX"/>
    <property type="match status" value="1"/>
</dbReference>
<name>RPPH_BURCH</name>
<evidence type="ECO:0000255" key="1">
    <source>
        <dbReference type="HAMAP-Rule" id="MF_00298"/>
    </source>
</evidence>
<reference key="1">
    <citation type="submission" date="2006-08" db="EMBL/GenBank/DDBJ databases">
        <title>Complete sequence of chromosome 1 of Burkholderia cenocepacia HI2424.</title>
        <authorList>
            <person name="Copeland A."/>
            <person name="Lucas S."/>
            <person name="Lapidus A."/>
            <person name="Barry K."/>
            <person name="Detter J.C."/>
            <person name="Glavina del Rio T."/>
            <person name="Hammon N."/>
            <person name="Israni S."/>
            <person name="Pitluck S."/>
            <person name="Chain P."/>
            <person name="Malfatti S."/>
            <person name="Shin M."/>
            <person name="Vergez L."/>
            <person name="Schmutz J."/>
            <person name="Larimer F."/>
            <person name="Land M."/>
            <person name="Hauser L."/>
            <person name="Kyrpides N."/>
            <person name="Kim E."/>
            <person name="LiPuma J.J."/>
            <person name="Gonzalez C.F."/>
            <person name="Konstantinidis K."/>
            <person name="Tiedje J.M."/>
            <person name="Richardson P."/>
        </authorList>
    </citation>
    <scope>NUCLEOTIDE SEQUENCE [LARGE SCALE GENOMIC DNA]</scope>
    <source>
        <strain>HI2424</strain>
    </source>
</reference>
<sequence length="214" mass="25309">MLDREGFRPNVGIILLNARNEVFWGKRLREHSWQFPQGGIKYGETPMQAMYRELHEETGLHPEHVKIIGRTRDWLRYEVPDKFIKREVRGHYRGQKQIWFLLRMVGRDCDICLRATDHPEFDAWRWNEYWVPLDAVIEFKRDVYQLALTELSRFLRRPAQRAEKPRGPRVSRYPRVIGAQAQTLTIVDTSVVCSEIEVEASTLDEMPPHVIVGK</sequence>
<keyword id="KW-0378">Hydrolase</keyword>
<protein>
    <recommendedName>
        <fullName evidence="1">RNA pyrophosphohydrolase</fullName>
        <ecNumber evidence="1">3.6.1.-</ecNumber>
    </recommendedName>
    <alternativeName>
        <fullName evidence="1">(Di)nucleoside polyphosphate hydrolase</fullName>
    </alternativeName>
</protein>